<gene>
    <name evidence="1" type="primary">psbX1</name>
    <name type="ordered locus">CYA_2558</name>
</gene>
<protein>
    <recommendedName>
        <fullName evidence="1">Photosystem II reaction center protein X 1</fullName>
    </recommendedName>
</protein>
<organism>
    <name type="scientific">Synechococcus sp. (strain JA-3-3Ab)</name>
    <name type="common">Cyanobacteria bacterium Yellowstone A-Prime</name>
    <dbReference type="NCBI Taxonomy" id="321327"/>
    <lineage>
        <taxon>Bacteria</taxon>
        <taxon>Bacillati</taxon>
        <taxon>Cyanobacteriota</taxon>
        <taxon>Cyanophyceae</taxon>
        <taxon>Synechococcales</taxon>
        <taxon>Synechococcaceae</taxon>
        <taxon>Synechococcus</taxon>
    </lineage>
</organism>
<sequence length="38" mass="4323">MTPSLANFLWSLLYGAVVLGLLFGAIVFVSQRDRVRRR</sequence>
<accession>Q2JRR9</accession>
<proteinExistence type="inferred from homology"/>
<keyword id="KW-0472">Membrane</keyword>
<keyword id="KW-0602">Photosynthesis</keyword>
<keyword id="KW-0604">Photosystem II</keyword>
<keyword id="KW-0793">Thylakoid</keyword>
<keyword id="KW-0812">Transmembrane</keyword>
<keyword id="KW-1133">Transmembrane helix</keyword>
<reference key="1">
    <citation type="journal article" date="2007" name="ISME J.">
        <title>Population level functional diversity in a microbial community revealed by comparative genomic and metagenomic analyses.</title>
        <authorList>
            <person name="Bhaya D."/>
            <person name="Grossman A.R."/>
            <person name="Steunou A.-S."/>
            <person name="Khuri N."/>
            <person name="Cohan F.M."/>
            <person name="Hamamura N."/>
            <person name="Melendrez M.C."/>
            <person name="Bateson M.M."/>
            <person name="Ward D.M."/>
            <person name="Heidelberg J.F."/>
        </authorList>
    </citation>
    <scope>NUCLEOTIDE SEQUENCE [LARGE SCALE GENOMIC DNA]</scope>
    <source>
        <strain>JA-3-3Ab</strain>
    </source>
</reference>
<feature type="chain" id="PRO_0000345381" description="Photosystem II reaction center protein X 1">
    <location>
        <begin position="1"/>
        <end position="38"/>
    </location>
</feature>
<feature type="transmembrane region" description="Helical" evidence="1">
    <location>
        <begin position="8"/>
        <end position="28"/>
    </location>
</feature>
<comment type="function">
    <text evidence="1">Involved in the binding and/or turnover of quinones at the Q(B) site of photosystem II (PSII). PSII is a light-driven water plastoquinone oxidoreductase, using light energy to abstract electrons from H(2)O, generating a proton gradient subsequently used for ATP formation.</text>
</comment>
<comment type="subunit">
    <text evidence="1">PSII is composed of 1 copy each of membrane proteins PsbA, PsbB, PsbC, PsbD, PsbE, PsbF, PsbH, PsbI, PsbJ, PsbK, PsbL, PsbM, PsbT, PsbX, PsbY, PsbZ, Psb30/Ycf12, peripheral proteins PsbO, CyanoQ (PsbQ), PsbU, PsbV and a large number of cofactors. It forms dimeric complexes.</text>
</comment>
<comment type="subcellular location">
    <subcellularLocation>
        <location evidence="1">Cellular thylakoid membrane</location>
        <topology evidence="1">Single-pass membrane protein</topology>
    </subcellularLocation>
</comment>
<comment type="similarity">
    <text evidence="1">Belongs to the PsbX family. Type 1 subfamily.</text>
</comment>
<evidence type="ECO:0000255" key="1">
    <source>
        <dbReference type="HAMAP-Rule" id="MF_01386"/>
    </source>
</evidence>
<name>PSBX1_SYNJA</name>
<dbReference type="EMBL" id="CP000239">
    <property type="protein sequence ID" value="ABD00677.1"/>
    <property type="molecule type" value="Genomic_DNA"/>
</dbReference>
<dbReference type="RefSeq" id="WP_011431350.1">
    <property type="nucleotide sequence ID" value="NC_007775.1"/>
</dbReference>
<dbReference type="SMR" id="Q2JRR9"/>
<dbReference type="STRING" id="321327.CYA_2558"/>
<dbReference type="KEGG" id="cya:CYA_2558"/>
<dbReference type="eggNOG" id="ENOG5030Y19">
    <property type="taxonomic scope" value="Bacteria"/>
</dbReference>
<dbReference type="HOGENOM" id="CLU_212837_0_1_3"/>
<dbReference type="OrthoDB" id="541645at2"/>
<dbReference type="Proteomes" id="UP000008818">
    <property type="component" value="Chromosome"/>
</dbReference>
<dbReference type="GO" id="GO:0009523">
    <property type="term" value="C:photosystem II"/>
    <property type="evidence" value="ECO:0007669"/>
    <property type="project" value="UniProtKB-KW"/>
</dbReference>
<dbReference type="GO" id="GO:0031676">
    <property type="term" value="C:plasma membrane-derived thylakoid membrane"/>
    <property type="evidence" value="ECO:0007669"/>
    <property type="project" value="UniProtKB-SubCell"/>
</dbReference>
<dbReference type="GO" id="GO:0015979">
    <property type="term" value="P:photosynthesis"/>
    <property type="evidence" value="ECO:0007669"/>
    <property type="project" value="UniProtKB-UniRule"/>
</dbReference>
<dbReference type="Gene3D" id="1.20.5.510">
    <property type="entry name" value="Single helix bin"/>
    <property type="match status" value="1"/>
</dbReference>
<dbReference type="HAMAP" id="MF_01386">
    <property type="entry name" value="PSII_PsbX_1"/>
    <property type="match status" value="1"/>
</dbReference>
<dbReference type="InterPro" id="IPR009518">
    <property type="entry name" value="PSII_PsbX"/>
</dbReference>
<dbReference type="InterPro" id="IPR023431">
    <property type="entry name" value="PSII_PsbX_type_1_subfam"/>
</dbReference>
<dbReference type="Pfam" id="PF06596">
    <property type="entry name" value="PsbX"/>
    <property type="match status" value="1"/>
</dbReference>